<evidence type="ECO:0000255" key="1">
    <source>
        <dbReference type="HAMAP-Rule" id="MF_01476"/>
    </source>
</evidence>
<evidence type="ECO:0000305" key="2"/>
<keyword id="KW-0479">Metal-binding</keyword>
<keyword id="KW-0687">Ribonucleoprotein</keyword>
<keyword id="KW-0689">Ribosomal protein</keyword>
<keyword id="KW-0694">RNA-binding</keyword>
<keyword id="KW-0699">rRNA-binding</keyword>
<keyword id="KW-0862">Zinc</keyword>
<keyword id="KW-0863">Zinc-finger</keyword>
<comment type="function">
    <text evidence="1">Binds to the 23S rRNA.</text>
</comment>
<comment type="cofactor">
    <cofactor evidence="1">
        <name>Zn(2+)</name>
        <dbReference type="ChEBI" id="CHEBI:29105"/>
    </cofactor>
    <text evidence="1">Binds 1 zinc ion per subunit.</text>
</comment>
<comment type="subunit">
    <text evidence="1">Part of the 50S ribosomal subunit.</text>
</comment>
<comment type="similarity">
    <text evidence="1">Belongs to the eukaryotic ribosomal protein eL42 family.</text>
</comment>
<comment type="sequence caution" evidence="2">
    <conflict type="erroneous initiation">
        <sequence resource="EMBL-CDS" id="BAA31067"/>
    </conflict>
    <text>Extended N-terminus.</text>
</comment>
<reference key="1">
    <citation type="journal article" date="1998" name="DNA Res.">
        <title>Complete sequence and gene organization of the genome of a hyper-thermophilic archaebacterium, Pyrococcus horikoshii OT3.</title>
        <authorList>
            <person name="Kawarabayasi Y."/>
            <person name="Sawada M."/>
            <person name="Horikawa H."/>
            <person name="Haikawa Y."/>
            <person name="Hino Y."/>
            <person name="Yamamoto S."/>
            <person name="Sekine M."/>
            <person name="Baba S."/>
            <person name="Kosugi H."/>
            <person name="Hosoyama A."/>
            <person name="Nagai Y."/>
            <person name="Sakai M."/>
            <person name="Ogura K."/>
            <person name="Otsuka R."/>
            <person name="Nakazawa H."/>
            <person name="Takamiya M."/>
            <person name="Ohfuku Y."/>
            <person name="Funahashi T."/>
            <person name="Tanaka T."/>
            <person name="Kudoh Y."/>
            <person name="Yamazaki J."/>
            <person name="Kushida N."/>
            <person name="Oguchi A."/>
            <person name="Aoki K."/>
            <person name="Yoshizawa T."/>
            <person name="Nakamura Y."/>
            <person name="Robb F.T."/>
            <person name="Horikoshi K."/>
            <person name="Masuchi Y."/>
            <person name="Shizuya H."/>
            <person name="Kikuchi H."/>
        </authorList>
    </citation>
    <scope>NUCLEOTIDE SEQUENCE [LARGE SCALE GENOMIC DNA]</scope>
    <source>
        <strain>ATCC 700860 / DSM 12428 / JCM 9974 / NBRC 100139 / OT-3</strain>
    </source>
</reference>
<gene>
    <name evidence="1" type="primary">rpl44e</name>
    <name type="ordered locus">PH1940</name>
</gene>
<organism>
    <name type="scientific">Pyrococcus horikoshii (strain ATCC 700860 / DSM 12428 / JCM 9974 / NBRC 100139 / OT-3)</name>
    <dbReference type="NCBI Taxonomy" id="70601"/>
    <lineage>
        <taxon>Archaea</taxon>
        <taxon>Methanobacteriati</taxon>
        <taxon>Methanobacteriota</taxon>
        <taxon>Thermococci</taxon>
        <taxon>Thermococcales</taxon>
        <taxon>Thermococcaceae</taxon>
        <taxon>Pyrococcus</taxon>
    </lineage>
</organism>
<feature type="chain" id="PRO_0000149155" description="Large ribosomal subunit protein eL42">
    <location>
        <begin position="1"/>
        <end position="94"/>
    </location>
</feature>
<feature type="zinc finger region" description="C4-type" evidence="1">
    <location>
        <begin position="11"/>
        <end position="74"/>
    </location>
</feature>
<feature type="binding site" evidence="1">
    <location>
        <position position="11"/>
    </location>
    <ligand>
        <name>Zn(2+)</name>
        <dbReference type="ChEBI" id="CHEBI:29105"/>
    </ligand>
</feature>
<feature type="binding site" evidence="1">
    <location>
        <position position="14"/>
    </location>
    <ligand>
        <name>Zn(2+)</name>
        <dbReference type="ChEBI" id="CHEBI:29105"/>
    </ligand>
</feature>
<feature type="binding site" evidence="1">
    <location>
        <position position="71"/>
    </location>
    <ligand>
        <name>Zn(2+)</name>
        <dbReference type="ChEBI" id="CHEBI:29105"/>
    </ligand>
</feature>
<feature type="binding site" evidence="1">
    <location>
        <position position="74"/>
    </location>
    <ligand>
        <name>Zn(2+)</name>
        <dbReference type="ChEBI" id="CHEBI:29105"/>
    </ligand>
</feature>
<proteinExistence type="inferred from homology"/>
<sequence>MKYPKQIRTYCPYCKRHTIHKVERVKRRPRSELSAGQRRFRRVLKGYGGFPRPKPEGREKPVKKLDLRFVCTVCGRAHTRGKGFRVKRFELVEV</sequence>
<accession>O59603</accession>
<protein>
    <recommendedName>
        <fullName evidence="1">Large ribosomal subunit protein eL42</fullName>
    </recommendedName>
    <alternativeName>
        <fullName evidence="2">50S ribosomal protein L44e</fullName>
    </alternativeName>
</protein>
<dbReference type="EMBL" id="BA000001">
    <property type="protein sequence ID" value="BAA31067.1"/>
    <property type="status" value="ALT_INIT"/>
    <property type="molecule type" value="Genomic_DNA"/>
</dbReference>
<dbReference type="PIR" id="D71209">
    <property type="entry name" value="D71209"/>
</dbReference>
<dbReference type="RefSeq" id="WP_010886007.1">
    <property type="nucleotide sequence ID" value="NC_000961.1"/>
</dbReference>
<dbReference type="SMR" id="O59603"/>
<dbReference type="STRING" id="70601.gene:9378953"/>
<dbReference type="EnsemblBacteria" id="BAA31067">
    <property type="protein sequence ID" value="BAA31067"/>
    <property type="gene ID" value="BAA31067"/>
</dbReference>
<dbReference type="GeneID" id="1442789"/>
<dbReference type="KEGG" id="pho:PH1940"/>
<dbReference type="eggNOG" id="arCOG04109">
    <property type="taxonomic scope" value="Archaea"/>
</dbReference>
<dbReference type="OrthoDB" id="52456at2157"/>
<dbReference type="Proteomes" id="UP000000752">
    <property type="component" value="Chromosome"/>
</dbReference>
<dbReference type="GO" id="GO:1990904">
    <property type="term" value="C:ribonucleoprotein complex"/>
    <property type="evidence" value="ECO:0007669"/>
    <property type="project" value="UniProtKB-KW"/>
</dbReference>
<dbReference type="GO" id="GO:0005840">
    <property type="term" value="C:ribosome"/>
    <property type="evidence" value="ECO:0007669"/>
    <property type="project" value="UniProtKB-KW"/>
</dbReference>
<dbReference type="GO" id="GO:0070180">
    <property type="term" value="F:large ribosomal subunit rRNA binding"/>
    <property type="evidence" value="ECO:0007669"/>
    <property type="project" value="UniProtKB-UniRule"/>
</dbReference>
<dbReference type="GO" id="GO:0003735">
    <property type="term" value="F:structural constituent of ribosome"/>
    <property type="evidence" value="ECO:0007669"/>
    <property type="project" value="InterPro"/>
</dbReference>
<dbReference type="GO" id="GO:0008270">
    <property type="term" value="F:zinc ion binding"/>
    <property type="evidence" value="ECO:0007669"/>
    <property type="project" value="UniProtKB-UniRule"/>
</dbReference>
<dbReference type="GO" id="GO:0006412">
    <property type="term" value="P:translation"/>
    <property type="evidence" value="ECO:0007669"/>
    <property type="project" value="UniProtKB-UniRule"/>
</dbReference>
<dbReference type="FunFam" id="3.10.450.80:FF:000001">
    <property type="entry name" value="60S ribosomal protein L44"/>
    <property type="match status" value="1"/>
</dbReference>
<dbReference type="Gene3D" id="3.10.450.80">
    <property type="match status" value="1"/>
</dbReference>
<dbReference type="HAMAP" id="MF_01476">
    <property type="entry name" value="Ribosomal_L44e"/>
    <property type="match status" value="1"/>
</dbReference>
<dbReference type="InterPro" id="IPR000552">
    <property type="entry name" value="Ribosomal_eL44"/>
</dbReference>
<dbReference type="InterPro" id="IPR053708">
    <property type="entry name" value="Ribosomal_LSU_eL42"/>
</dbReference>
<dbReference type="InterPro" id="IPR011332">
    <property type="entry name" value="Ribosomal_zn-bd"/>
</dbReference>
<dbReference type="NCBIfam" id="NF004425">
    <property type="entry name" value="PRK05767.1"/>
    <property type="match status" value="1"/>
</dbReference>
<dbReference type="PANTHER" id="PTHR10369">
    <property type="entry name" value="60S RIBOSOMAL PROTEIN L36A/L44"/>
    <property type="match status" value="1"/>
</dbReference>
<dbReference type="Pfam" id="PF00935">
    <property type="entry name" value="Ribosomal_L44"/>
    <property type="match status" value="1"/>
</dbReference>
<dbReference type="SUPFAM" id="SSF57829">
    <property type="entry name" value="Zn-binding ribosomal proteins"/>
    <property type="match status" value="1"/>
</dbReference>
<dbReference type="PROSITE" id="PS01172">
    <property type="entry name" value="RIBOSOMAL_L44E"/>
    <property type="match status" value="1"/>
</dbReference>
<name>RL44E_PYRHO</name>